<feature type="chain" id="PRO_0000401403" description="Putative pumilio homolog 21">
    <location>
        <begin position="1"/>
        <end position="517"/>
    </location>
</feature>
<feature type="domain" description="PUM-HD" evidence="2">
    <location>
        <begin position="148"/>
        <end position="502"/>
    </location>
</feature>
<feature type="repeat" description="Pumilio 1; degenerate">
    <location>
        <begin position="258"/>
        <end position="293"/>
    </location>
</feature>
<feature type="repeat" description="Pumilio 2">
    <location>
        <begin position="294"/>
        <end position="328"/>
    </location>
</feature>
<feature type="repeat" description="Pumilio 3; degenerate">
    <location>
        <begin position="329"/>
        <end position="363"/>
    </location>
</feature>
<feature type="repeat" description="Pumilio 4">
    <location>
        <begin position="364"/>
        <end position="400"/>
    </location>
</feature>
<feature type="repeat" description="Pumilio 5">
    <location>
        <begin position="401"/>
        <end position="437"/>
    </location>
</feature>
<feature type="repeat" description="Pumilio 6">
    <location>
        <begin position="438"/>
        <end position="473"/>
    </location>
</feature>
<feature type="region of interest" description="Disordered" evidence="3">
    <location>
        <begin position="33"/>
        <end position="57"/>
    </location>
</feature>
<feature type="region of interest" description="Disordered" evidence="3">
    <location>
        <begin position="69"/>
        <end position="94"/>
    </location>
</feature>
<feature type="region of interest" description="Disordered" evidence="3">
    <location>
        <begin position="107"/>
        <end position="130"/>
    </location>
</feature>
<feature type="region of interest" description="Disordered" evidence="3">
    <location>
        <begin position="175"/>
        <end position="201"/>
    </location>
</feature>
<feature type="compositionally biased region" description="Low complexity" evidence="3">
    <location>
        <begin position="42"/>
        <end position="51"/>
    </location>
</feature>
<feature type="compositionally biased region" description="Polar residues" evidence="3">
    <location>
        <begin position="69"/>
        <end position="84"/>
    </location>
</feature>
<feature type="compositionally biased region" description="Polar residues" evidence="3">
    <location>
        <begin position="177"/>
        <end position="190"/>
    </location>
</feature>
<proteinExistence type="inferred from homology"/>
<comment type="function">
    <text evidence="1">Sequence-specific RNA-binding protein that regulates translation and mRNA stability by binding the 3'-UTR of target mRNAs.</text>
</comment>
<comment type="subcellular location">
    <subcellularLocation>
        <location evidence="4">Cytoplasm</location>
    </subcellularLocation>
</comment>
<comment type="domain">
    <text evidence="1">The pumilio repeats mediate the association with RNA by packing together to form a right-handed superhelix that approximates a half donut. The number as well as the specific sequence of the repeats determine the specificity for target mRNAs (By similarity).</text>
</comment>
<keyword id="KW-0963">Cytoplasm</keyword>
<keyword id="KW-1185">Reference proteome</keyword>
<keyword id="KW-0677">Repeat</keyword>
<keyword id="KW-0694">RNA-binding</keyword>
<keyword id="KW-0810">Translation regulation</keyword>
<gene>
    <name type="primary">APUM21</name>
    <name type="ordered locus">At5g09610</name>
    <name type="ORF">F17I14_200</name>
    <name type="ORF">MTH16.2</name>
</gene>
<protein>
    <recommendedName>
        <fullName>Putative pumilio homolog 21</fullName>
        <shortName>APUM-21</shortName>
        <shortName>AtPUM21</shortName>
    </recommendedName>
</protein>
<dbReference type="EMBL" id="AB020752">
    <property type="protein sequence ID" value="BAB09516.1"/>
    <property type="molecule type" value="Genomic_DNA"/>
</dbReference>
<dbReference type="EMBL" id="AL353994">
    <property type="protein sequence ID" value="CAB89369.1"/>
    <property type="molecule type" value="Genomic_DNA"/>
</dbReference>
<dbReference type="EMBL" id="CP002688">
    <property type="protein sequence ID" value="AED91417.1"/>
    <property type="molecule type" value="Genomic_DNA"/>
</dbReference>
<dbReference type="PIR" id="T49937">
    <property type="entry name" value="T49937"/>
</dbReference>
<dbReference type="RefSeq" id="NP_196523.1">
    <property type="nucleotide sequence ID" value="NM_120998.2"/>
</dbReference>
<dbReference type="SMR" id="Q9LXC5"/>
<dbReference type="PaxDb" id="3702-AT5G09610.1"/>
<dbReference type="ProteomicsDB" id="226113"/>
<dbReference type="EnsemblPlants" id="AT5G09610.1">
    <property type="protein sequence ID" value="AT5G09610.1"/>
    <property type="gene ID" value="AT5G09610"/>
</dbReference>
<dbReference type="GeneID" id="830820"/>
<dbReference type="Gramene" id="AT5G09610.1">
    <property type="protein sequence ID" value="AT5G09610.1"/>
    <property type="gene ID" value="AT5G09610"/>
</dbReference>
<dbReference type="KEGG" id="ath:AT5G09610"/>
<dbReference type="Araport" id="AT5G09610"/>
<dbReference type="TAIR" id="AT5G09610">
    <property type="gene designation" value="PUM21"/>
</dbReference>
<dbReference type="eggNOG" id="KOG2049">
    <property type="taxonomic scope" value="Eukaryota"/>
</dbReference>
<dbReference type="HOGENOM" id="CLU_040232_0_0_1"/>
<dbReference type="InParanoid" id="Q9LXC5"/>
<dbReference type="OMA" id="LYANYNH"/>
<dbReference type="PhylomeDB" id="Q9LXC5"/>
<dbReference type="PRO" id="PR:Q9LXC5"/>
<dbReference type="Proteomes" id="UP000006548">
    <property type="component" value="Chromosome 5"/>
</dbReference>
<dbReference type="ExpressionAtlas" id="Q9LXC5">
    <property type="expression patterns" value="baseline and differential"/>
</dbReference>
<dbReference type="GO" id="GO:0005737">
    <property type="term" value="C:cytoplasm"/>
    <property type="evidence" value="ECO:0007669"/>
    <property type="project" value="UniProtKB-SubCell"/>
</dbReference>
<dbReference type="GO" id="GO:0003723">
    <property type="term" value="F:RNA binding"/>
    <property type="evidence" value="ECO:0007669"/>
    <property type="project" value="UniProtKB-KW"/>
</dbReference>
<dbReference type="GO" id="GO:0006417">
    <property type="term" value="P:regulation of translation"/>
    <property type="evidence" value="ECO:0007669"/>
    <property type="project" value="UniProtKB-KW"/>
</dbReference>
<dbReference type="Gene3D" id="1.25.10.10">
    <property type="entry name" value="Leucine-rich Repeat Variant"/>
    <property type="match status" value="1"/>
</dbReference>
<dbReference type="InterPro" id="IPR011989">
    <property type="entry name" value="ARM-like"/>
</dbReference>
<dbReference type="InterPro" id="IPR016024">
    <property type="entry name" value="ARM-type_fold"/>
</dbReference>
<dbReference type="InterPro" id="IPR033133">
    <property type="entry name" value="PUM-HD"/>
</dbReference>
<dbReference type="InterPro" id="IPR001313">
    <property type="entry name" value="Pumilio_RNA-bd_rpt"/>
</dbReference>
<dbReference type="PANTHER" id="PTHR12537:SF137">
    <property type="entry name" value="PUMILIO HOMOLOG 16-RELATED"/>
    <property type="match status" value="1"/>
</dbReference>
<dbReference type="PANTHER" id="PTHR12537">
    <property type="entry name" value="RNA BINDING PROTEIN PUMILIO-RELATED"/>
    <property type="match status" value="1"/>
</dbReference>
<dbReference type="Pfam" id="PF00806">
    <property type="entry name" value="PUF"/>
    <property type="match status" value="4"/>
</dbReference>
<dbReference type="SMART" id="SM00025">
    <property type="entry name" value="Pumilio"/>
    <property type="match status" value="4"/>
</dbReference>
<dbReference type="SUPFAM" id="SSF48371">
    <property type="entry name" value="ARM repeat"/>
    <property type="match status" value="1"/>
</dbReference>
<dbReference type="PROSITE" id="PS50302">
    <property type="entry name" value="PUM"/>
    <property type="match status" value="4"/>
</dbReference>
<dbReference type="PROSITE" id="PS50303">
    <property type="entry name" value="PUM_HD"/>
    <property type="match status" value="1"/>
</dbReference>
<evidence type="ECO:0000250" key="1"/>
<evidence type="ECO:0000255" key="2">
    <source>
        <dbReference type="PROSITE-ProRule" id="PRU00318"/>
    </source>
</evidence>
<evidence type="ECO:0000256" key="3">
    <source>
        <dbReference type="SAM" id="MobiDB-lite"/>
    </source>
</evidence>
<evidence type="ECO:0000305" key="4"/>
<name>PUM21_ARATH</name>
<accession>Q9LXC5</accession>
<organism>
    <name type="scientific">Arabidopsis thaliana</name>
    <name type="common">Mouse-ear cress</name>
    <dbReference type="NCBI Taxonomy" id="3702"/>
    <lineage>
        <taxon>Eukaryota</taxon>
        <taxon>Viridiplantae</taxon>
        <taxon>Streptophyta</taxon>
        <taxon>Embryophyta</taxon>
        <taxon>Tracheophyta</taxon>
        <taxon>Spermatophyta</taxon>
        <taxon>Magnoliopsida</taxon>
        <taxon>eudicotyledons</taxon>
        <taxon>Gunneridae</taxon>
        <taxon>Pentapetalae</taxon>
        <taxon>rosids</taxon>
        <taxon>malvids</taxon>
        <taxon>Brassicales</taxon>
        <taxon>Brassicaceae</taxon>
        <taxon>Camelineae</taxon>
        <taxon>Arabidopsis</taxon>
    </lineage>
</organism>
<sequence length="517" mass="58776">MADDNGKNPMPNDRGYDTLLTAFNNLKLYANYNHQEPGESGNTNINSNNNHPNPPLLTAFKSLKLYANKNNQEPGESGNTTINRNKNHPNPPLVTAFNNLELYANYNHQEPGESGTTNINNNNPNPPLLTAFDNLRLYANYNHQEPGESSNNNYPNLNVYNVGHISAASFNAPPFTPSSLTQPDDSSSRYSGKPFPPPPLSFVSPGVDKDRNWLSSLLDMMTCAQRFTEFQKYLQDLDTYPTAERESHLFKIGSALTTTKRIFLHLATNQYGSQALRILFRRSPSLDHLLFCAVDTNFFLLMSDKYGRGLIIPAIRAVDKTKKESLYKLTYEYTLHLARLETGCLALNNVLQEIRGIYRDLIFECVANNADWLSFDPYGTHVVQNILILQNPVATTAIAERLRGSFFRLAMERQGSYVVEKCLKSDFARDQVLEEFRGNAKEWVRMTTDKFGNFVVQSALRVMKEKEMRPLLREFVEKLRPHFGKMEIGRGRNTLRVIQEEIVGWINQLPDKSGYVN</sequence>
<reference key="1">
    <citation type="journal article" date="1999" name="DNA Res.">
        <title>Structural analysis of Arabidopsis thaliana chromosome 5. IX. Sequence features of the regions of 1,011,550 bp covered by seventeen P1 and TAC clones.</title>
        <authorList>
            <person name="Kaneko T."/>
            <person name="Katoh T."/>
            <person name="Sato S."/>
            <person name="Nakamura Y."/>
            <person name="Asamizu E."/>
            <person name="Kotani H."/>
            <person name="Miyajima N."/>
            <person name="Tabata S."/>
        </authorList>
    </citation>
    <scope>NUCLEOTIDE SEQUENCE [LARGE SCALE GENOMIC DNA]</scope>
    <source>
        <strain>cv. Columbia</strain>
    </source>
</reference>
<reference key="2">
    <citation type="journal article" date="2000" name="Nature">
        <title>Sequence and analysis of chromosome 5 of the plant Arabidopsis thaliana.</title>
        <authorList>
            <person name="Tabata S."/>
            <person name="Kaneko T."/>
            <person name="Nakamura Y."/>
            <person name="Kotani H."/>
            <person name="Kato T."/>
            <person name="Asamizu E."/>
            <person name="Miyajima N."/>
            <person name="Sasamoto S."/>
            <person name="Kimura T."/>
            <person name="Hosouchi T."/>
            <person name="Kawashima K."/>
            <person name="Kohara M."/>
            <person name="Matsumoto M."/>
            <person name="Matsuno A."/>
            <person name="Muraki A."/>
            <person name="Nakayama S."/>
            <person name="Nakazaki N."/>
            <person name="Naruo K."/>
            <person name="Okumura S."/>
            <person name="Shinpo S."/>
            <person name="Takeuchi C."/>
            <person name="Wada T."/>
            <person name="Watanabe A."/>
            <person name="Yamada M."/>
            <person name="Yasuda M."/>
            <person name="Sato S."/>
            <person name="de la Bastide M."/>
            <person name="Huang E."/>
            <person name="Spiegel L."/>
            <person name="Gnoj L."/>
            <person name="O'Shaughnessy A."/>
            <person name="Preston R."/>
            <person name="Habermann K."/>
            <person name="Murray J."/>
            <person name="Johnson D."/>
            <person name="Rohlfing T."/>
            <person name="Nelson J."/>
            <person name="Stoneking T."/>
            <person name="Pepin K."/>
            <person name="Spieth J."/>
            <person name="Sekhon M."/>
            <person name="Armstrong J."/>
            <person name="Becker M."/>
            <person name="Belter E."/>
            <person name="Cordum H."/>
            <person name="Cordes M."/>
            <person name="Courtney L."/>
            <person name="Courtney W."/>
            <person name="Dante M."/>
            <person name="Du H."/>
            <person name="Edwards J."/>
            <person name="Fryman J."/>
            <person name="Haakensen B."/>
            <person name="Lamar E."/>
            <person name="Latreille P."/>
            <person name="Leonard S."/>
            <person name="Meyer R."/>
            <person name="Mulvaney E."/>
            <person name="Ozersky P."/>
            <person name="Riley A."/>
            <person name="Strowmatt C."/>
            <person name="Wagner-McPherson C."/>
            <person name="Wollam A."/>
            <person name="Yoakum M."/>
            <person name="Bell M."/>
            <person name="Dedhia N."/>
            <person name="Parnell L."/>
            <person name="Shah R."/>
            <person name="Rodriguez M."/>
            <person name="Hoon See L."/>
            <person name="Vil D."/>
            <person name="Baker J."/>
            <person name="Kirchoff K."/>
            <person name="Toth K."/>
            <person name="King L."/>
            <person name="Bahret A."/>
            <person name="Miller B."/>
            <person name="Marra M.A."/>
            <person name="Martienssen R."/>
            <person name="McCombie W.R."/>
            <person name="Wilson R.K."/>
            <person name="Murphy G."/>
            <person name="Bancroft I."/>
            <person name="Volckaert G."/>
            <person name="Wambutt R."/>
            <person name="Duesterhoeft A."/>
            <person name="Stiekema W."/>
            <person name="Pohl T."/>
            <person name="Entian K.-D."/>
            <person name="Terryn N."/>
            <person name="Hartley N."/>
            <person name="Bent E."/>
            <person name="Johnson S."/>
            <person name="Langham S.-A."/>
            <person name="McCullagh B."/>
            <person name="Robben J."/>
            <person name="Grymonprez B."/>
            <person name="Zimmermann W."/>
            <person name="Ramsperger U."/>
            <person name="Wedler H."/>
            <person name="Balke K."/>
            <person name="Wedler E."/>
            <person name="Peters S."/>
            <person name="van Staveren M."/>
            <person name="Dirkse W."/>
            <person name="Mooijman P."/>
            <person name="Klein Lankhorst R."/>
            <person name="Weitzenegger T."/>
            <person name="Bothe G."/>
            <person name="Rose M."/>
            <person name="Hauf J."/>
            <person name="Berneiser S."/>
            <person name="Hempel S."/>
            <person name="Feldpausch M."/>
            <person name="Lamberth S."/>
            <person name="Villarroel R."/>
            <person name="Gielen J."/>
            <person name="Ardiles W."/>
            <person name="Bents O."/>
            <person name="Lemcke K."/>
            <person name="Kolesov G."/>
            <person name="Mayer K.F.X."/>
            <person name="Rudd S."/>
            <person name="Schoof H."/>
            <person name="Schueller C."/>
            <person name="Zaccaria P."/>
            <person name="Mewes H.-W."/>
            <person name="Bevan M."/>
            <person name="Fransz P.F."/>
        </authorList>
    </citation>
    <scope>NUCLEOTIDE SEQUENCE [LARGE SCALE GENOMIC DNA]</scope>
    <source>
        <strain>cv. Columbia</strain>
    </source>
</reference>
<reference key="3">
    <citation type="journal article" date="2017" name="Plant J.">
        <title>Araport11: a complete reannotation of the Arabidopsis thaliana reference genome.</title>
        <authorList>
            <person name="Cheng C.Y."/>
            <person name="Krishnakumar V."/>
            <person name="Chan A.P."/>
            <person name="Thibaud-Nissen F."/>
            <person name="Schobel S."/>
            <person name="Town C.D."/>
        </authorList>
    </citation>
    <scope>GENOME REANNOTATION</scope>
    <source>
        <strain>cv. Columbia</strain>
    </source>
</reference>
<reference key="4">
    <citation type="journal article" date="2009" name="FEBS J.">
        <title>Molecular characterization of Arabidopsis thaliana PUF proteins -- binding specificity and target candidates.</title>
        <authorList>
            <person name="Francischini C.W."/>
            <person name="Quaggio R.B."/>
        </authorList>
    </citation>
    <scope>GENE FAMILY</scope>
</reference>
<reference key="5">
    <citation type="journal article" date="2010" name="BMC Plant Biol.">
        <title>The Puf family of RNA-binding proteins in plants: phylogeny, structural modeling, activity and subcellular localization.</title>
        <authorList>
            <person name="Tam P.P."/>
            <person name="Barrette-Ng I.H."/>
            <person name="Simon D.M."/>
            <person name="Tam M.W."/>
            <person name="Ang A.L."/>
            <person name="Muench D.G."/>
        </authorList>
    </citation>
    <scope>GENE FAMILY</scope>
</reference>